<proteinExistence type="inferred from homology"/>
<gene>
    <name evidence="1" type="primary">sfsA</name>
    <name type="ordered locus">ECIAI39_0150</name>
</gene>
<sequence length="234" mass="26210">MEFSPPLQRATLIQRYKRFLADVITPDGRELTLHCPNTGAMTGCATPGDTVWYSTSDNTKRKYPHTWELTQSQSGAFICVNTLWANRLTKEAILNESISELSGYSSLKSEVKYGAEHSRIDFMLQADSRPDCYIEVKSVTLAENEQGYFPDAVTERGQKHLRELMSVAAEGQRAVIFFAVLHSAITRFSPARHIDEKYAQLLSEAQQRGVEILAYKAELSAEGMALKKSLPVTL</sequence>
<reference key="1">
    <citation type="journal article" date="2009" name="PLoS Genet.">
        <title>Organised genome dynamics in the Escherichia coli species results in highly diverse adaptive paths.</title>
        <authorList>
            <person name="Touchon M."/>
            <person name="Hoede C."/>
            <person name="Tenaillon O."/>
            <person name="Barbe V."/>
            <person name="Baeriswyl S."/>
            <person name="Bidet P."/>
            <person name="Bingen E."/>
            <person name="Bonacorsi S."/>
            <person name="Bouchier C."/>
            <person name="Bouvet O."/>
            <person name="Calteau A."/>
            <person name="Chiapello H."/>
            <person name="Clermont O."/>
            <person name="Cruveiller S."/>
            <person name="Danchin A."/>
            <person name="Diard M."/>
            <person name="Dossat C."/>
            <person name="Karoui M.E."/>
            <person name="Frapy E."/>
            <person name="Garry L."/>
            <person name="Ghigo J.M."/>
            <person name="Gilles A.M."/>
            <person name="Johnson J."/>
            <person name="Le Bouguenec C."/>
            <person name="Lescat M."/>
            <person name="Mangenot S."/>
            <person name="Martinez-Jehanne V."/>
            <person name="Matic I."/>
            <person name="Nassif X."/>
            <person name="Oztas S."/>
            <person name="Petit M.A."/>
            <person name="Pichon C."/>
            <person name="Rouy Z."/>
            <person name="Ruf C.S."/>
            <person name="Schneider D."/>
            <person name="Tourret J."/>
            <person name="Vacherie B."/>
            <person name="Vallenet D."/>
            <person name="Medigue C."/>
            <person name="Rocha E.P.C."/>
            <person name="Denamur E."/>
        </authorList>
    </citation>
    <scope>NUCLEOTIDE SEQUENCE [LARGE SCALE GENOMIC DNA]</scope>
    <source>
        <strain>IAI39 / ExPEC</strain>
    </source>
</reference>
<accession>B7NIA9</accession>
<dbReference type="EMBL" id="CU928164">
    <property type="protein sequence ID" value="CAR16290.1"/>
    <property type="molecule type" value="Genomic_DNA"/>
</dbReference>
<dbReference type="RefSeq" id="WP_000396032.1">
    <property type="nucleotide sequence ID" value="NC_011750.1"/>
</dbReference>
<dbReference type="RefSeq" id="YP_002406196.1">
    <property type="nucleotide sequence ID" value="NC_011750.1"/>
</dbReference>
<dbReference type="SMR" id="B7NIA9"/>
<dbReference type="STRING" id="585057.ECIAI39_0150"/>
<dbReference type="KEGG" id="ect:ECIAI39_0150"/>
<dbReference type="PATRIC" id="fig|585057.6.peg.162"/>
<dbReference type="HOGENOM" id="CLU_052299_2_0_6"/>
<dbReference type="Proteomes" id="UP000000749">
    <property type="component" value="Chromosome"/>
</dbReference>
<dbReference type="GO" id="GO:0003677">
    <property type="term" value="F:DNA binding"/>
    <property type="evidence" value="ECO:0007669"/>
    <property type="project" value="UniProtKB-KW"/>
</dbReference>
<dbReference type="CDD" id="cd22359">
    <property type="entry name" value="SfsA-like_bacterial"/>
    <property type="match status" value="1"/>
</dbReference>
<dbReference type="FunFam" id="2.40.50.580:FF:000001">
    <property type="entry name" value="Sugar fermentation stimulation protein A"/>
    <property type="match status" value="1"/>
</dbReference>
<dbReference type="FunFam" id="3.40.1350.60:FF:000001">
    <property type="entry name" value="Sugar fermentation stimulation protein A"/>
    <property type="match status" value="1"/>
</dbReference>
<dbReference type="Gene3D" id="2.40.50.580">
    <property type="match status" value="1"/>
</dbReference>
<dbReference type="Gene3D" id="3.40.1350.60">
    <property type="match status" value="1"/>
</dbReference>
<dbReference type="HAMAP" id="MF_00095">
    <property type="entry name" value="SfsA"/>
    <property type="match status" value="1"/>
</dbReference>
<dbReference type="InterPro" id="IPR005224">
    <property type="entry name" value="SfsA"/>
</dbReference>
<dbReference type="InterPro" id="IPR040452">
    <property type="entry name" value="SfsA_C"/>
</dbReference>
<dbReference type="InterPro" id="IPR041465">
    <property type="entry name" value="SfsA_N"/>
</dbReference>
<dbReference type="NCBIfam" id="TIGR00230">
    <property type="entry name" value="sfsA"/>
    <property type="match status" value="1"/>
</dbReference>
<dbReference type="PANTHER" id="PTHR30545">
    <property type="entry name" value="SUGAR FERMENTATION STIMULATION PROTEIN A"/>
    <property type="match status" value="1"/>
</dbReference>
<dbReference type="PANTHER" id="PTHR30545:SF2">
    <property type="entry name" value="SUGAR FERMENTATION STIMULATION PROTEIN A"/>
    <property type="match status" value="1"/>
</dbReference>
<dbReference type="Pfam" id="PF03749">
    <property type="entry name" value="SfsA"/>
    <property type="match status" value="1"/>
</dbReference>
<dbReference type="Pfam" id="PF17746">
    <property type="entry name" value="SfsA_N"/>
    <property type="match status" value="1"/>
</dbReference>
<evidence type="ECO:0000255" key="1">
    <source>
        <dbReference type="HAMAP-Rule" id="MF_00095"/>
    </source>
</evidence>
<feature type="chain" id="PRO_1000117268" description="Sugar fermentation stimulation protein A">
    <location>
        <begin position="1"/>
        <end position="234"/>
    </location>
</feature>
<feature type="DNA-binding region" description="H-T-H motif" evidence="1">
    <location>
        <begin position="201"/>
        <end position="220"/>
    </location>
</feature>
<protein>
    <recommendedName>
        <fullName evidence="1">Sugar fermentation stimulation protein A</fullName>
    </recommendedName>
</protein>
<keyword id="KW-0238">DNA-binding</keyword>
<name>SFSA_ECO7I</name>
<organism>
    <name type="scientific">Escherichia coli O7:K1 (strain IAI39 / ExPEC)</name>
    <dbReference type="NCBI Taxonomy" id="585057"/>
    <lineage>
        <taxon>Bacteria</taxon>
        <taxon>Pseudomonadati</taxon>
        <taxon>Pseudomonadota</taxon>
        <taxon>Gammaproteobacteria</taxon>
        <taxon>Enterobacterales</taxon>
        <taxon>Enterobacteriaceae</taxon>
        <taxon>Escherichia</taxon>
    </lineage>
</organism>
<comment type="function">
    <text evidence="1">Binds to DNA non-specifically. Could be a regulatory factor involved in maltose metabolism.</text>
</comment>
<comment type="similarity">
    <text evidence="1">Belongs to the SfsA family.</text>
</comment>